<feature type="chain" id="PRO_0000355807" description="Large ribosomal subunit protein uL14">
    <location>
        <begin position="1"/>
        <end position="122"/>
    </location>
</feature>
<proteinExistence type="inferred from homology"/>
<dbReference type="EMBL" id="CP000524">
    <property type="protein sequence ID" value="ABM44839.1"/>
    <property type="molecule type" value="Genomic_DNA"/>
</dbReference>
<dbReference type="EMBL" id="CP000524">
    <property type="protein sequence ID" value="ABM44849.1"/>
    <property type="molecule type" value="Genomic_DNA"/>
</dbReference>
<dbReference type="SMR" id="A1USM4"/>
<dbReference type="STRING" id="360095.BARBAKC583_0676"/>
<dbReference type="GeneID" id="4684654"/>
<dbReference type="KEGG" id="bbk:BARBAKC583_0676"/>
<dbReference type="KEGG" id="bbk:BARBAKC583_0708"/>
<dbReference type="PATRIC" id="fig|360095.6.peg.687"/>
<dbReference type="eggNOG" id="COG0093">
    <property type="taxonomic scope" value="Bacteria"/>
</dbReference>
<dbReference type="HOGENOM" id="CLU_095071_2_1_5"/>
<dbReference type="OrthoDB" id="9806379at2"/>
<dbReference type="Proteomes" id="UP000000643">
    <property type="component" value="Chromosome"/>
</dbReference>
<dbReference type="GO" id="GO:0022625">
    <property type="term" value="C:cytosolic large ribosomal subunit"/>
    <property type="evidence" value="ECO:0007669"/>
    <property type="project" value="TreeGrafter"/>
</dbReference>
<dbReference type="GO" id="GO:0070180">
    <property type="term" value="F:large ribosomal subunit rRNA binding"/>
    <property type="evidence" value="ECO:0007669"/>
    <property type="project" value="TreeGrafter"/>
</dbReference>
<dbReference type="GO" id="GO:0003735">
    <property type="term" value="F:structural constituent of ribosome"/>
    <property type="evidence" value="ECO:0007669"/>
    <property type="project" value="InterPro"/>
</dbReference>
<dbReference type="GO" id="GO:0006412">
    <property type="term" value="P:translation"/>
    <property type="evidence" value="ECO:0007669"/>
    <property type="project" value="UniProtKB-UniRule"/>
</dbReference>
<dbReference type="CDD" id="cd00337">
    <property type="entry name" value="Ribosomal_uL14"/>
    <property type="match status" value="1"/>
</dbReference>
<dbReference type="FunFam" id="2.40.150.20:FF:000001">
    <property type="entry name" value="50S ribosomal protein L14"/>
    <property type="match status" value="1"/>
</dbReference>
<dbReference type="Gene3D" id="2.40.150.20">
    <property type="entry name" value="Ribosomal protein L14"/>
    <property type="match status" value="1"/>
</dbReference>
<dbReference type="HAMAP" id="MF_01367">
    <property type="entry name" value="Ribosomal_uL14"/>
    <property type="match status" value="1"/>
</dbReference>
<dbReference type="InterPro" id="IPR000218">
    <property type="entry name" value="Ribosomal_uL14"/>
</dbReference>
<dbReference type="InterPro" id="IPR005745">
    <property type="entry name" value="Ribosomal_uL14_bac-type"/>
</dbReference>
<dbReference type="InterPro" id="IPR019972">
    <property type="entry name" value="Ribosomal_uL14_CS"/>
</dbReference>
<dbReference type="InterPro" id="IPR036853">
    <property type="entry name" value="Ribosomal_uL14_sf"/>
</dbReference>
<dbReference type="NCBIfam" id="TIGR01067">
    <property type="entry name" value="rplN_bact"/>
    <property type="match status" value="1"/>
</dbReference>
<dbReference type="PANTHER" id="PTHR11761">
    <property type="entry name" value="50S/60S RIBOSOMAL PROTEIN L14/L23"/>
    <property type="match status" value="1"/>
</dbReference>
<dbReference type="PANTHER" id="PTHR11761:SF3">
    <property type="entry name" value="LARGE RIBOSOMAL SUBUNIT PROTEIN UL14M"/>
    <property type="match status" value="1"/>
</dbReference>
<dbReference type="Pfam" id="PF00238">
    <property type="entry name" value="Ribosomal_L14"/>
    <property type="match status" value="1"/>
</dbReference>
<dbReference type="SMART" id="SM01374">
    <property type="entry name" value="Ribosomal_L14"/>
    <property type="match status" value="1"/>
</dbReference>
<dbReference type="SUPFAM" id="SSF50193">
    <property type="entry name" value="Ribosomal protein L14"/>
    <property type="match status" value="1"/>
</dbReference>
<dbReference type="PROSITE" id="PS00049">
    <property type="entry name" value="RIBOSOMAL_L14"/>
    <property type="match status" value="1"/>
</dbReference>
<sequence>MIQMQTNLDVADNSGARRVMCIKVLGGSKRKYASVGDIIVVSVKDVIPRGRVKKGDVMKAVVVRTAKDIRRADGSVIRFDRNAAVLVDNKKEPIGTRIFGPVPRELRGKNHMKIVSLAPEVL</sequence>
<keyword id="KW-0687">Ribonucleoprotein</keyword>
<keyword id="KW-0689">Ribosomal protein</keyword>
<keyword id="KW-0694">RNA-binding</keyword>
<keyword id="KW-0699">rRNA-binding</keyword>
<comment type="function">
    <text evidence="1">Binds to 23S rRNA. Forms part of two intersubunit bridges in the 70S ribosome.</text>
</comment>
<comment type="subunit">
    <text evidence="1">Part of the 50S ribosomal subunit. Forms a cluster with proteins L3 and L19. In the 70S ribosome, L14 and L19 interact and together make contacts with the 16S rRNA in bridges B5 and B8.</text>
</comment>
<comment type="similarity">
    <text evidence="1">Belongs to the universal ribosomal protein uL14 family.</text>
</comment>
<organism>
    <name type="scientific">Bartonella bacilliformis (strain ATCC 35685 / KC583 / Herrer 020/F12,63)</name>
    <dbReference type="NCBI Taxonomy" id="360095"/>
    <lineage>
        <taxon>Bacteria</taxon>
        <taxon>Pseudomonadati</taxon>
        <taxon>Pseudomonadota</taxon>
        <taxon>Alphaproteobacteria</taxon>
        <taxon>Hyphomicrobiales</taxon>
        <taxon>Bartonellaceae</taxon>
        <taxon>Bartonella</taxon>
    </lineage>
</organism>
<name>RL14_BARBK</name>
<protein>
    <recommendedName>
        <fullName evidence="1">Large ribosomal subunit protein uL14</fullName>
    </recommendedName>
    <alternativeName>
        <fullName evidence="2">50S ribosomal protein L14</fullName>
    </alternativeName>
</protein>
<reference key="1">
    <citation type="submission" date="2006-12" db="EMBL/GenBank/DDBJ databases">
        <authorList>
            <person name="Hendrix L."/>
            <person name="Mohamoud Y."/>
            <person name="Radune D."/>
            <person name="Shvartsbeyn A."/>
            <person name="Daugherty S."/>
            <person name="Dodson R."/>
            <person name="Durkin A.S."/>
            <person name="Harkins D."/>
            <person name="Huot H."/>
            <person name="Kothari S.P."/>
            <person name="Madupu R."/>
            <person name="Li J."/>
            <person name="Nelson W.C."/>
            <person name="Shrivastava S."/>
            <person name="Giglio M.G."/>
            <person name="Haft D."/>
            <person name="Selengut J."/>
            <person name="Fraser-Ligget C."/>
            <person name="Seshadri R."/>
        </authorList>
    </citation>
    <scope>NUCLEOTIDE SEQUENCE [LARGE SCALE GENOMIC DNA]</scope>
    <source>
        <strain>ATCC 35685 / KC583 / Herrer 020/F12,63</strain>
    </source>
</reference>
<accession>A1USM4</accession>
<evidence type="ECO:0000255" key="1">
    <source>
        <dbReference type="HAMAP-Rule" id="MF_01367"/>
    </source>
</evidence>
<evidence type="ECO:0000305" key="2"/>
<gene>
    <name evidence="1" type="primary">rplN1</name>
    <name type="ordered locus">BARBAKC583_0676</name>
</gene>
<gene>
    <name evidence="1" type="primary">rplN2</name>
    <name type="ordered locus">BARBAKC583_0708</name>
</gene>